<name>PGK_GEOMG</name>
<comment type="catalytic activity">
    <reaction evidence="1">
        <text>(2R)-3-phosphoglycerate + ATP = (2R)-3-phospho-glyceroyl phosphate + ADP</text>
        <dbReference type="Rhea" id="RHEA:14801"/>
        <dbReference type="ChEBI" id="CHEBI:30616"/>
        <dbReference type="ChEBI" id="CHEBI:57604"/>
        <dbReference type="ChEBI" id="CHEBI:58272"/>
        <dbReference type="ChEBI" id="CHEBI:456216"/>
        <dbReference type="EC" id="2.7.2.3"/>
    </reaction>
</comment>
<comment type="pathway">
    <text evidence="1">Carbohydrate degradation; glycolysis; pyruvate from D-glyceraldehyde 3-phosphate: step 2/5.</text>
</comment>
<comment type="subunit">
    <text evidence="1">Monomer.</text>
</comment>
<comment type="subcellular location">
    <subcellularLocation>
        <location evidence="1">Cytoplasm</location>
    </subcellularLocation>
</comment>
<comment type="similarity">
    <text evidence="1">Belongs to the phosphoglycerate kinase family.</text>
</comment>
<accession>Q39U98</accession>
<evidence type="ECO:0000255" key="1">
    <source>
        <dbReference type="HAMAP-Rule" id="MF_00145"/>
    </source>
</evidence>
<gene>
    <name evidence="1" type="primary">pgk</name>
    <name type="ordered locus">Gmet_1947</name>
</gene>
<proteinExistence type="inferred from homology"/>
<protein>
    <recommendedName>
        <fullName evidence="1">Phosphoglycerate kinase</fullName>
        <ecNumber evidence="1">2.7.2.3</ecNumber>
    </recommendedName>
</protein>
<organism>
    <name type="scientific">Geobacter metallireducens (strain ATCC 53774 / DSM 7210 / GS-15)</name>
    <dbReference type="NCBI Taxonomy" id="269799"/>
    <lineage>
        <taxon>Bacteria</taxon>
        <taxon>Pseudomonadati</taxon>
        <taxon>Thermodesulfobacteriota</taxon>
        <taxon>Desulfuromonadia</taxon>
        <taxon>Geobacterales</taxon>
        <taxon>Geobacteraceae</taxon>
        <taxon>Geobacter</taxon>
    </lineage>
</organism>
<feature type="chain" id="PRO_1000009614" description="Phosphoglycerate kinase">
    <location>
        <begin position="1"/>
        <end position="398"/>
    </location>
</feature>
<feature type="binding site" evidence="1">
    <location>
        <begin position="22"/>
        <end position="24"/>
    </location>
    <ligand>
        <name>substrate</name>
    </ligand>
</feature>
<feature type="binding site" evidence="1">
    <location>
        <position position="38"/>
    </location>
    <ligand>
        <name>substrate</name>
    </ligand>
</feature>
<feature type="binding site" evidence="1">
    <location>
        <begin position="61"/>
        <end position="64"/>
    </location>
    <ligand>
        <name>substrate</name>
    </ligand>
</feature>
<feature type="binding site" evidence="1">
    <location>
        <position position="120"/>
    </location>
    <ligand>
        <name>substrate</name>
    </ligand>
</feature>
<feature type="binding site" evidence="1">
    <location>
        <position position="153"/>
    </location>
    <ligand>
        <name>substrate</name>
    </ligand>
</feature>
<feature type="binding site" evidence="1">
    <location>
        <position position="204"/>
    </location>
    <ligand>
        <name>ATP</name>
        <dbReference type="ChEBI" id="CHEBI:30616"/>
    </ligand>
</feature>
<feature type="binding site" evidence="1">
    <location>
        <position position="326"/>
    </location>
    <ligand>
        <name>ATP</name>
        <dbReference type="ChEBI" id="CHEBI:30616"/>
    </ligand>
</feature>
<feature type="binding site" evidence="1">
    <location>
        <begin position="352"/>
        <end position="355"/>
    </location>
    <ligand>
        <name>ATP</name>
        <dbReference type="ChEBI" id="CHEBI:30616"/>
    </ligand>
</feature>
<sequence length="398" mass="43578">MAIRYIDEIESLKGKKVFIRVDFNVPLDEHQNITEDTRIRAVLPTINFALDAGAKVILASHLGRPKGERKPKYSMAPAAKRLSRLLNKEVQLAPDCIGDEVKKMIDAMKPGEVLLLENVRFYEGEEKNDADFAKALANDCEIYINDAFAVSHRAHASVEAITKFFPVVAAGFLMNNEINYFEKAMQKPIRPLVAILGGAKVSGKLEVLESLVNKVDKIIIGGGMAFTFLKALGYNVGKSLVEEELLEIALTTYTKAREKGVKFYLPVDCVAADRFNPEAETKVTTIQEIPEEWMALDIGPATVTLFTEALQNAKTIIWNGPMGVFEMDAFSRGTFAMVSAVANSYALTIVGGGDTDSAVHRAGEYAKISYISTGGGAFLELLEGKHLPGIKVLEENGK</sequence>
<keyword id="KW-0067">ATP-binding</keyword>
<keyword id="KW-0963">Cytoplasm</keyword>
<keyword id="KW-0324">Glycolysis</keyword>
<keyword id="KW-0418">Kinase</keyword>
<keyword id="KW-0547">Nucleotide-binding</keyword>
<keyword id="KW-1185">Reference proteome</keyword>
<keyword id="KW-0808">Transferase</keyword>
<dbReference type="EC" id="2.7.2.3" evidence="1"/>
<dbReference type="EMBL" id="CP000148">
    <property type="protein sequence ID" value="ABB32176.1"/>
    <property type="molecule type" value="Genomic_DNA"/>
</dbReference>
<dbReference type="RefSeq" id="WP_004511896.1">
    <property type="nucleotide sequence ID" value="NC_007517.1"/>
</dbReference>
<dbReference type="SMR" id="Q39U98"/>
<dbReference type="STRING" id="269799.Gmet_1947"/>
<dbReference type="KEGG" id="gme:Gmet_1947"/>
<dbReference type="eggNOG" id="COG0126">
    <property type="taxonomic scope" value="Bacteria"/>
</dbReference>
<dbReference type="HOGENOM" id="CLU_025427_0_2_7"/>
<dbReference type="UniPathway" id="UPA00109">
    <property type="reaction ID" value="UER00185"/>
</dbReference>
<dbReference type="Proteomes" id="UP000007073">
    <property type="component" value="Chromosome"/>
</dbReference>
<dbReference type="GO" id="GO:0005829">
    <property type="term" value="C:cytosol"/>
    <property type="evidence" value="ECO:0007669"/>
    <property type="project" value="TreeGrafter"/>
</dbReference>
<dbReference type="GO" id="GO:0043531">
    <property type="term" value="F:ADP binding"/>
    <property type="evidence" value="ECO:0007669"/>
    <property type="project" value="TreeGrafter"/>
</dbReference>
<dbReference type="GO" id="GO:0005524">
    <property type="term" value="F:ATP binding"/>
    <property type="evidence" value="ECO:0007669"/>
    <property type="project" value="UniProtKB-KW"/>
</dbReference>
<dbReference type="GO" id="GO:0004618">
    <property type="term" value="F:phosphoglycerate kinase activity"/>
    <property type="evidence" value="ECO:0007669"/>
    <property type="project" value="UniProtKB-UniRule"/>
</dbReference>
<dbReference type="GO" id="GO:0006094">
    <property type="term" value="P:gluconeogenesis"/>
    <property type="evidence" value="ECO:0007669"/>
    <property type="project" value="TreeGrafter"/>
</dbReference>
<dbReference type="GO" id="GO:0006096">
    <property type="term" value="P:glycolytic process"/>
    <property type="evidence" value="ECO:0007669"/>
    <property type="project" value="UniProtKB-UniRule"/>
</dbReference>
<dbReference type="CDD" id="cd00318">
    <property type="entry name" value="Phosphoglycerate_kinase"/>
    <property type="match status" value="1"/>
</dbReference>
<dbReference type="FunFam" id="3.40.50.1260:FF:000001">
    <property type="entry name" value="Phosphoglycerate kinase"/>
    <property type="match status" value="1"/>
</dbReference>
<dbReference type="FunFam" id="3.40.50.1260:FF:000002">
    <property type="entry name" value="Phosphoglycerate kinase"/>
    <property type="match status" value="1"/>
</dbReference>
<dbReference type="Gene3D" id="3.40.50.1260">
    <property type="entry name" value="Phosphoglycerate kinase, N-terminal domain"/>
    <property type="match status" value="2"/>
</dbReference>
<dbReference type="HAMAP" id="MF_00145">
    <property type="entry name" value="Phosphoglyc_kinase"/>
    <property type="match status" value="1"/>
</dbReference>
<dbReference type="InterPro" id="IPR001576">
    <property type="entry name" value="Phosphoglycerate_kinase"/>
</dbReference>
<dbReference type="InterPro" id="IPR015911">
    <property type="entry name" value="Phosphoglycerate_kinase_CS"/>
</dbReference>
<dbReference type="InterPro" id="IPR015824">
    <property type="entry name" value="Phosphoglycerate_kinase_N"/>
</dbReference>
<dbReference type="InterPro" id="IPR036043">
    <property type="entry name" value="Phosphoglycerate_kinase_sf"/>
</dbReference>
<dbReference type="PANTHER" id="PTHR11406">
    <property type="entry name" value="PHOSPHOGLYCERATE KINASE"/>
    <property type="match status" value="1"/>
</dbReference>
<dbReference type="PANTHER" id="PTHR11406:SF23">
    <property type="entry name" value="PHOSPHOGLYCERATE KINASE 1, CHLOROPLASTIC-RELATED"/>
    <property type="match status" value="1"/>
</dbReference>
<dbReference type="Pfam" id="PF00162">
    <property type="entry name" value="PGK"/>
    <property type="match status" value="1"/>
</dbReference>
<dbReference type="PIRSF" id="PIRSF000724">
    <property type="entry name" value="Pgk"/>
    <property type="match status" value="1"/>
</dbReference>
<dbReference type="PRINTS" id="PR00477">
    <property type="entry name" value="PHGLYCKINASE"/>
</dbReference>
<dbReference type="SUPFAM" id="SSF53748">
    <property type="entry name" value="Phosphoglycerate kinase"/>
    <property type="match status" value="1"/>
</dbReference>
<dbReference type="PROSITE" id="PS00111">
    <property type="entry name" value="PGLYCERATE_KINASE"/>
    <property type="match status" value="1"/>
</dbReference>
<reference key="1">
    <citation type="journal article" date="2009" name="BMC Microbiol.">
        <title>The genome sequence of Geobacter metallireducens: features of metabolism, physiology and regulation common and dissimilar to Geobacter sulfurreducens.</title>
        <authorList>
            <person name="Aklujkar M."/>
            <person name="Krushkal J."/>
            <person name="DiBartolo G."/>
            <person name="Lapidus A."/>
            <person name="Land M.L."/>
            <person name="Lovley D.R."/>
        </authorList>
    </citation>
    <scope>NUCLEOTIDE SEQUENCE [LARGE SCALE GENOMIC DNA]</scope>
    <source>
        <strain>ATCC 53774 / DSM 7210 / GS-15</strain>
    </source>
</reference>